<keyword id="KW-0256">Endoplasmic reticulum</keyword>
<keyword id="KW-0378">Hydrolase</keyword>
<keyword id="KW-0472">Membrane</keyword>
<keyword id="KW-0645">Protease</keyword>
<keyword id="KW-1185">Reference proteome</keyword>
<keyword id="KW-0735">Signal-anchor</keyword>
<keyword id="KW-0812">Transmembrane</keyword>
<keyword id="KW-1133">Transmembrane helix</keyword>
<proteinExistence type="inferred from homology"/>
<evidence type="ECO:0000250" key="1">
    <source>
        <dbReference type="UniProtKB" id="P15367"/>
    </source>
</evidence>
<evidence type="ECO:0000250" key="2">
    <source>
        <dbReference type="UniProtKB" id="P67812"/>
    </source>
</evidence>
<evidence type="ECO:0000255" key="3"/>
<evidence type="ECO:0000305" key="4"/>
<comment type="function">
    <text evidence="1 2">Catalytic component of the signal peptidase complex (SPC) which catalyzes the cleavage of N-terminal signal sequences from nascent proteins as they are translocated into the lumen of the endoplasmic reticulum (By similarity). Specifically cleaves N-terminal signal peptides that contain a hydrophobic alpha-helix (h-region) shorter than 18-20 amino acids (By similarity).</text>
</comment>
<comment type="catalytic activity">
    <reaction evidence="1">
        <text>Cleavage of hydrophobic, N-terminal signal or leader sequences from secreted and periplasmic proteins.</text>
        <dbReference type="EC" id="3.4.21.89"/>
    </reaction>
</comment>
<comment type="subunit">
    <text evidence="1 2">Component of the signal peptidase complex (SPC) composed of a catalytic subunit SEC11 and three accessory subunits SPC1, SPC2 and SPC3 (By similarity). The complex induces a local thinning of the ER membrane which is used to measure the length of the signal peptide (SP) h-region of protein substrates. This ensures the selectivity of the complex towards h-regions shorter than 18-20 amino acids (By similarity). SPC associates with the translocon complex (By similarity).</text>
</comment>
<comment type="subcellular location">
    <subcellularLocation>
        <location evidence="1">Endoplasmic reticulum membrane</location>
        <topology evidence="1">Single-pass type II membrane protein</topology>
    </subcellularLocation>
</comment>
<comment type="domain">
    <text evidence="2">The C-terminal short (CTS) helix is essential for catalytic activity. It may be accommodated as a transmembrane helix in the thinned membrane environment of the complex, similarly to the signal peptide in the complex substrates.</text>
</comment>
<comment type="similarity">
    <text evidence="4">Belongs to the peptidase S26B family.</text>
</comment>
<comment type="sequence caution" evidence="4">
    <conflict type="erroneous initiation">
        <sequence resource="EMBL-CDS" id="EDK41967"/>
    </conflict>
    <text>Extended N-terminus.</text>
</comment>
<gene>
    <name type="primary">SEC11</name>
    <name type="ORF">LELG_00145</name>
</gene>
<organism>
    <name type="scientific">Lodderomyces elongisporus (strain ATCC 11503 / CBS 2605 / JCM 1781 / NBRC 1676 / NRRL YB-4239)</name>
    <name type="common">Yeast</name>
    <name type="synonym">Saccharomyces elongisporus</name>
    <dbReference type="NCBI Taxonomy" id="379508"/>
    <lineage>
        <taxon>Eukaryota</taxon>
        <taxon>Fungi</taxon>
        <taxon>Dikarya</taxon>
        <taxon>Ascomycota</taxon>
        <taxon>Saccharomycotina</taxon>
        <taxon>Pichiomycetes</taxon>
        <taxon>Debaryomycetaceae</taxon>
        <taxon>Candida/Lodderomyces clade</taxon>
        <taxon>Lodderomyces</taxon>
    </lineage>
</organism>
<reference key="1">
    <citation type="journal article" date="2009" name="Nature">
        <title>Evolution of pathogenicity and sexual reproduction in eight Candida genomes.</title>
        <authorList>
            <person name="Butler G."/>
            <person name="Rasmussen M.D."/>
            <person name="Lin M.F."/>
            <person name="Santos M.A.S."/>
            <person name="Sakthikumar S."/>
            <person name="Munro C.A."/>
            <person name="Rheinbay E."/>
            <person name="Grabherr M."/>
            <person name="Forche A."/>
            <person name="Reedy J.L."/>
            <person name="Agrafioti I."/>
            <person name="Arnaud M.B."/>
            <person name="Bates S."/>
            <person name="Brown A.J.P."/>
            <person name="Brunke S."/>
            <person name="Costanzo M.C."/>
            <person name="Fitzpatrick D.A."/>
            <person name="de Groot P.W.J."/>
            <person name="Harris D."/>
            <person name="Hoyer L.L."/>
            <person name="Hube B."/>
            <person name="Klis F.M."/>
            <person name="Kodira C."/>
            <person name="Lennard N."/>
            <person name="Logue M.E."/>
            <person name="Martin R."/>
            <person name="Neiman A.M."/>
            <person name="Nikolaou E."/>
            <person name="Quail M.A."/>
            <person name="Quinn J."/>
            <person name="Santos M.C."/>
            <person name="Schmitzberger F.F."/>
            <person name="Sherlock G."/>
            <person name="Shah P."/>
            <person name="Silverstein K.A.T."/>
            <person name="Skrzypek M.S."/>
            <person name="Soll D."/>
            <person name="Staggs R."/>
            <person name="Stansfield I."/>
            <person name="Stumpf M.P.H."/>
            <person name="Sudbery P.E."/>
            <person name="Srikantha T."/>
            <person name="Zeng Q."/>
            <person name="Berman J."/>
            <person name="Berriman M."/>
            <person name="Heitman J."/>
            <person name="Gow N.A.R."/>
            <person name="Lorenz M.C."/>
            <person name="Birren B.W."/>
            <person name="Kellis M."/>
            <person name="Cuomo C.A."/>
        </authorList>
    </citation>
    <scope>NUCLEOTIDE SEQUENCE [LARGE SCALE GENOMIC DNA]</scope>
    <source>
        <strain>ATCC 11503 / BCRC 21390 / CBS 2605 / JCM 1781 / NBRC 1676 / NRRL YB-4239</strain>
    </source>
</reference>
<dbReference type="EC" id="3.4.21.89" evidence="1"/>
<dbReference type="EMBL" id="CH981524">
    <property type="protein sequence ID" value="EDK41967.1"/>
    <property type="status" value="ALT_INIT"/>
    <property type="molecule type" value="Genomic_DNA"/>
</dbReference>
<dbReference type="RefSeq" id="XP_001527625.1">
    <property type="nucleotide sequence ID" value="XM_001527575.1"/>
</dbReference>
<dbReference type="SMR" id="A5DS09"/>
<dbReference type="FunCoup" id="A5DS09">
    <property type="interactions" value="643"/>
</dbReference>
<dbReference type="STRING" id="379508.A5DS09"/>
<dbReference type="MEROPS" id="S26.010"/>
<dbReference type="GeneID" id="5235618"/>
<dbReference type="KEGG" id="lel:PVL30_000141"/>
<dbReference type="eggNOG" id="KOG3342">
    <property type="taxonomic scope" value="Eukaryota"/>
</dbReference>
<dbReference type="HOGENOM" id="CLU_089996_0_2_1"/>
<dbReference type="InParanoid" id="A5DS09"/>
<dbReference type="OrthoDB" id="10257561at2759"/>
<dbReference type="Proteomes" id="UP000001996">
    <property type="component" value="Unassembled WGS sequence"/>
</dbReference>
<dbReference type="GO" id="GO:0005787">
    <property type="term" value="C:signal peptidase complex"/>
    <property type="evidence" value="ECO:0007669"/>
    <property type="project" value="UniProtKB-ARBA"/>
</dbReference>
<dbReference type="GO" id="GO:0004252">
    <property type="term" value="F:serine-type endopeptidase activity"/>
    <property type="evidence" value="ECO:0007669"/>
    <property type="project" value="UniProtKB-EC"/>
</dbReference>
<dbReference type="GO" id="GO:0006465">
    <property type="term" value="P:signal peptide processing"/>
    <property type="evidence" value="ECO:0007669"/>
    <property type="project" value="InterPro"/>
</dbReference>
<dbReference type="CDD" id="cd06530">
    <property type="entry name" value="S26_SPase_I"/>
    <property type="match status" value="1"/>
</dbReference>
<dbReference type="InterPro" id="IPR036286">
    <property type="entry name" value="LexA/Signal_pep-like_sf"/>
</dbReference>
<dbReference type="InterPro" id="IPR019756">
    <property type="entry name" value="Pept_S26A_signal_pept_1_Ser-AS"/>
</dbReference>
<dbReference type="InterPro" id="IPR015927">
    <property type="entry name" value="Peptidase_S24_S26A/B/C"/>
</dbReference>
<dbReference type="InterPro" id="IPR019533">
    <property type="entry name" value="Peptidase_S26"/>
</dbReference>
<dbReference type="InterPro" id="IPR001733">
    <property type="entry name" value="Peptidase_S26B"/>
</dbReference>
<dbReference type="NCBIfam" id="TIGR02228">
    <property type="entry name" value="sigpep_I_arch"/>
    <property type="match status" value="1"/>
</dbReference>
<dbReference type="PANTHER" id="PTHR10806">
    <property type="entry name" value="SIGNAL PEPTIDASE COMPLEX CATALYTIC SUBUNIT SEC11"/>
    <property type="match status" value="1"/>
</dbReference>
<dbReference type="PANTHER" id="PTHR10806:SF6">
    <property type="entry name" value="SIGNAL PEPTIDASE COMPLEX CATALYTIC SUBUNIT SEC11"/>
    <property type="match status" value="1"/>
</dbReference>
<dbReference type="Pfam" id="PF00717">
    <property type="entry name" value="Peptidase_S24"/>
    <property type="match status" value="1"/>
</dbReference>
<dbReference type="PRINTS" id="PR00728">
    <property type="entry name" value="SIGNALPTASE"/>
</dbReference>
<dbReference type="SUPFAM" id="SSF51306">
    <property type="entry name" value="LexA/Signal peptidase"/>
    <property type="match status" value="1"/>
</dbReference>
<dbReference type="PROSITE" id="PS00501">
    <property type="entry name" value="SPASE_I_1"/>
    <property type="match status" value="1"/>
</dbReference>
<dbReference type="PROSITE" id="PS00761">
    <property type="entry name" value="SPASE_I_3"/>
    <property type="match status" value="1"/>
</dbReference>
<accession>A5DS09</accession>
<feature type="chain" id="PRO_0000412335" description="Signal peptidase complex catalytic subunit SEC11">
    <location>
        <begin position="1"/>
        <end position="166"/>
    </location>
</feature>
<feature type="topological domain" description="Cytoplasmic" evidence="3">
    <location>
        <begin position="1"/>
        <end position="9"/>
    </location>
</feature>
<feature type="transmembrane region" description="Helical; Signal-anchor for type II membrane protein" evidence="3">
    <location>
        <begin position="10"/>
        <end position="30"/>
    </location>
</feature>
<feature type="topological domain" description="Lumenal" evidence="3">
    <location>
        <begin position="31"/>
        <end position="166"/>
    </location>
</feature>
<feature type="region of interest" description="C-terminal short (CTS) helix" evidence="2">
    <location>
        <begin position="152"/>
        <end position="163"/>
    </location>
</feature>
<feature type="active site" description="Charge relay system" evidence="1">
    <location>
        <position position="44"/>
    </location>
</feature>
<feature type="active site" description="Charge relay system" evidence="1">
    <location>
        <position position="83"/>
    </location>
</feature>
<feature type="active site" description="Charge relay system" evidence="1">
    <location>
        <position position="108"/>
    </location>
</feature>
<name>SEC11_LODEL</name>
<sequence length="166" mass="18843">MNIRQQLTQLLTLGYVFASAFMLWKTLSVVANLHSPIVVVLSGSMEPAFQRGDILFLWNRDEKQKVGDIVVYEIEGKTIPIVHRVLREHHNLEKQLLLTKGDNNAVDDLSLYAKKQSYLNRKNDLVGTVKGYLPFIGYVTILISENQYFKFGLLGLLGLSSLFSNE</sequence>
<protein>
    <recommendedName>
        <fullName>Signal peptidase complex catalytic subunit SEC11</fullName>
        <ecNumber evidence="1">3.4.21.89</ecNumber>
    </recommendedName>
    <alternativeName>
        <fullName>Signal peptidase I</fullName>
    </alternativeName>
</protein>